<reference key="1">
    <citation type="journal article" date="2001" name="Nature">
        <title>Complete genome sequence of a multiple drug resistant Salmonella enterica serovar Typhi CT18.</title>
        <authorList>
            <person name="Parkhill J."/>
            <person name="Dougan G."/>
            <person name="James K.D."/>
            <person name="Thomson N.R."/>
            <person name="Pickard D."/>
            <person name="Wain J."/>
            <person name="Churcher C.M."/>
            <person name="Mungall K.L."/>
            <person name="Bentley S.D."/>
            <person name="Holden M.T.G."/>
            <person name="Sebaihia M."/>
            <person name="Baker S."/>
            <person name="Basham D."/>
            <person name="Brooks K."/>
            <person name="Chillingworth T."/>
            <person name="Connerton P."/>
            <person name="Cronin A."/>
            <person name="Davis P."/>
            <person name="Davies R.M."/>
            <person name="Dowd L."/>
            <person name="White N."/>
            <person name="Farrar J."/>
            <person name="Feltwell T."/>
            <person name="Hamlin N."/>
            <person name="Haque A."/>
            <person name="Hien T.T."/>
            <person name="Holroyd S."/>
            <person name="Jagels K."/>
            <person name="Krogh A."/>
            <person name="Larsen T.S."/>
            <person name="Leather S."/>
            <person name="Moule S."/>
            <person name="O'Gaora P."/>
            <person name="Parry C."/>
            <person name="Quail M.A."/>
            <person name="Rutherford K.M."/>
            <person name="Simmonds M."/>
            <person name="Skelton J."/>
            <person name="Stevens K."/>
            <person name="Whitehead S."/>
            <person name="Barrell B.G."/>
        </authorList>
    </citation>
    <scope>NUCLEOTIDE SEQUENCE [LARGE SCALE GENOMIC DNA]</scope>
    <source>
        <strain>CT18</strain>
    </source>
</reference>
<reference key="2">
    <citation type="journal article" date="2003" name="J. Bacteriol.">
        <title>Comparative genomics of Salmonella enterica serovar Typhi strains Ty2 and CT18.</title>
        <authorList>
            <person name="Deng W."/>
            <person name="Liou S.-R."/>
            <person name="Plunkett G. III"/>
            <person name="Mayhew G.F."/>
            <person name="Rose D.J."/>
            <person name="Burland V."/>
            <person name="Kodoyianni V."/>
            <person name="Schwartz D.C."/>
            <person name="Blattner F.R."/>
        </authorList>
    </citation>
    <scope>NUCLEOTIDE SEQUENCE [LARGE SCALE GENOMIC DNA]</scope>
    <source>
        <strain>ATCC 700931 / Ty2</strain>
    </source>
</reference>
<accession>Q8Z9L9</accession>
<dbReference type="EC" id="1.17.1.8" evidence="1"/>
<dbReference type="EMBL" id="AL513382">
    <property type="protein sequence ID" value="CAD01219.1"/>
    <property type="molecule type" value="Genomic_DNA"/>
</dbReference>
<dbReference type="EMBL" id="AE014613">
    <property type="protein sequence ID" value="AAO67799.1"/>
    <property type="molecule type" value="Genomic_DNA"/>
</dbReference>
<dbReference type="RefSeq" id="NP_454675.1">
    <property type="nucleotide sequence ID" value="NC_003198.1"/>
</dbReference>
<dbReference type="RefSeq" id="WP_000544030.1">
    <property type="nucleotide sequence ID" value="NZ_WSUR01000028.1"/>
</dbReference>
<dbReference type="SMR" id="Q8Z9L9"/>
<dbReference type="STRING" id="220341.gene:17584121"/>
<dbReference type="KEGG" id="stt:t0066"/>
<dbReference type="KEGG" id="sty:STY0073"/>
<dbReference type="PATRIC" id="fig|220341.7.peg.73"/>
<dbReference type="eggNOG" id="COG0289">
    <property type="taxonomic scope" value="Bacteria"/>
</dbReference>
<dbReference type="HOGENOM" id="CLU_047479_2_1_6"/>
<dbReference type="OMA" id="HHPNKAD"/>
<dbReference type="OrthoDB" id="9790352at2"/>
<dbReference type="UniPathway" id="UPA00034">
    <property type="reaction ID" value="UER00018"/>
</dbReference>
<dbReference type="Proteomes" id="UP000000541">
    <property type="component" value="Chromosome"/>
</dbReference>
<dbReference type="Proteomes" id="UP000002670">
    <property type="component" value="Chromosome"/>
</dbReference>
<dbReference type="GO" id="GO:0005829">
    <property type="term" value="C:cytosol"/>
    <property type="evidence" value="ECO:0007669"/>
    <property type="project" value="TreeGrafter"/>
</dbReference>
<dbReference type="GO" id="GO:0008839">
    <property type="term" value="F:4-hydroxy-tetrahydrodipicolinate reductase"/>
    <property type="evidence" value="ECO:0007669"/>
    <property type="project" value="UniProtKB-EC"/>
</dbReference>
<dbReference type="GO" id="GO:0051287">
    <property type="term" value="F:NAD binding"/>
    <property type="evidence" value="ECO:0007669"/>
    <property type="project" value="UniProtKB-UniRule"/>
</dbReference>
<dbReference type="GO" id="GO:0050661">
    <property type="term" value="F:NADP binding"/>
    <property type="evidence" value="ECO:0007669"/>
    <property type="project" value="UniProtKB-UniRule"/>
</dbReference>
<dbReference type="GO" id="GO:0016726">
    <property type="term" value="F:oxidoreductase activity, acting on CH or CH2 groups, NAD or NADP as acceptor"/>
    <property type="evidence" value="ECO:0007669"/>
    <property type="project" value="UniProtKB-UniRule"/>
</dbReference>
<dbReference type="GO" id="GO:0019877">
    <property type="term" value="P:diaminopimelate biosynthetic process"/>
    <property type="evidence" value="ECO:0007669"/>
    <property type="project" value="UniProtKB-UniRule"/>
</dbReference>
<dbReference type="GO" id="GO:0009089">
    <property type="term" value="P:lysine biosynthetic process via diaminopimelate"/>
    <property type="evidence" value="ECO:0007669"/>
    <property type="project" value="UniProtKB-UniRule"/>
</dbReference>
<dbReference type="CDD" id="cd02274">
    <property type="entry name" value="DHDPR_N"/>
    <property type="match status" value="1"/>
</dbReference>
<dbReference type="FunFam" id="3.30.360.10:FF:000004">
    <property type="entry name" value="4-hydroxy-tetrahydrodipicolinate reductase"/>
    <property type="match status" value="1"/>
</dbReference>
<dbReference type="FunFam" id="3.40.50.720:FF:000048">
    <property type="entry name" value="4-hydroxy-tetrahydrodipicolinate reductase"/>
    <property type="match status" value="1"/>
</dbReference>
<dbReference type="Gene3D" id="3.30.360.10">
    <property type="entry name" value="Dihydrodipicolinate Reductase, domain 2"/>
    <property type="match status" value="1"/>
</dbReference>
<dbReference type="Gene3D" id="3.40.50.720">
    <property type="entry name" value="NAD(P)-binding Rossmann-like Domain"/>
    <property type="match status" value="1"/>
</dbReference>
<dbReference type="HAMAP" id="MF_00102">
    <property type="entry name" value="DapB"/>
    <property type="match status" value="1"/>
</dbReference>
<dbReference type="InterPro" id="IPR022663">
    <property type="entry name" value="DapB_C"/>
</dbReference>
<dbReference type="InterPro" id="IPR000846">
    <property type="entry name" value="DapB_N"/>
</dbReference>
<dbReference type="InterPro" id="IPR022664">
    <property type="entry name" value="DapB_N_CS"/>
</dbReference>
<dbReference type="InterPro" id="IPR023940">
    <property type="entry name" value="DHDPR_bac"/>
</dbReference>
<dbReference type="InterPro" id="IPR036291">
    <property type="entry name" value="NAD(P)-bd_dom_sf"/>
</dbReference>
<dbReference type="NCBIfam" id="TIGR00036">
    <property type="entry name" value="dapB"/>
    <property type="match status" value="1"/>
</dbReference>
<dbReference type="PANTHER" id="PTHR20836:SF0">
    <property type="entry name" value="4-HYDROXY-TETRAHYDRODIPICOLINATE REDUCTASE 1, CHLOROPLASTIC-RELATED"/>
    <property type="match status" value="1"/>
</dbReference>
<dbReference type="PANTHER" id="PTHR20836">
    <property type="entry name" value="DIHYDRODIPICOLINATE REDUCTASE"/>
    <property type="match status" value="1"/>
</dbReference>
<dbReference type="Pfam" id="PF05173">
    <property type="entry name" value="DapB_C"/>
    <property type="match status" value="1"/>
</dbReference>
<dbReference type="Pfam" id="PF01113">
    <property type="entry name" value="DapB_N"/>
    <property type="match status" value="1"/>
</dbReference>
<dbReference type="PIRSF" id="PIRSF000161">
    <property type="entry name" value="DHPR"/>
    <property type="match status" value="1"/>
</dbReference>
<dbReference type="SUPFAM" id="SSF55347">
    <property type="entry name" value="Glyceraldehyde-3-phosphate dehydrogenase-like, C-terminal domain"/>
    <property type="match status" value="1"/>
</dbReference>
<dbReference type="SUPFAM" id="SSF51735">
    <property type="entry name" value="NAD(P)-binding Rossmann-fold domains"/>
    <property type="match status" value="1"/>
</dbReference>
<dbReference type="PROSITE" id="PS01298">
    <property type="entry name" value="DAPB"/>
    <property type="match status" value="1"/>
</dbReference>
<comment type="function">
    <text evidence="1">Catalyzes the conversion of 4-hydroxy-tetrahydrodipicolinate (HTPA) to tetrahydrodipicolinate.</text>
</comment>
<comment type="catalytic activity">
    <reaction evidence="1">
        <text>(S)-2,3,4,5-tetrahydrodipicolinate + NAD(+) + H2O = (2S,4S)-4-hydroxy-2,3,4,5-tetrahydrodipicolinate + NADH + H(+)</text>
        <dbReference type="Rhea" id="RHEA:35323"/>
        <dbReference type="ChEBI" id="CHEBI:15377"/>
        <dbReference type="ChEBI" id="CHEBI:15378"/>
        <dbReference type="ChEBI" id="CHEBI:16845"/>
        <dbReference type="ChEBI" id="CHEBI:57540"/>
        <dbReference type="ChEBI" id="CHEBI:57945"/>
        <dbReference type="ChEBI" id="CHEBI:67139"/>
        <dbReference type="EC" id="1.17.1.8"/>
    </reaction>
</comment>
<comment type="catalytic activity">
    <reaction evidence="1">
        <text>(S)-2,3,4,5-tetrahydrodipicolinate + NADP(+) + H2O = (2S,4S)-4-hydroxy-2,3,4,5-tetrahydrodipicolinate + NADPH + H(+)</text>
        <dbReference type="Rhea" id="RHEA:35331"/>
        <dbReference type="ChEBI" id="CHEBI:15377"/>
        <dbReference type="ChEBI" id="CHEBI:15378"/>
        <dbReference type="ChEBI" id="CHEBI:16845"/>
        <dbReference type="ChEBI" id="CHEBI:57783"/>
        <dbReference type="ChEBI" id="CHEBI:58349"/>
        <dbReference type="ChEBI" id="CHEBI:67139"/>
        <dbReference type="EC" id="1.17.1.8"/>
    </reaction>
</comment>
<comment type="pathway">
    <text evidence="1">Amino-acid biosynthesis; L-lysine biosynthesis via DAP pathway; (S)-tetrahydrodipicolinate from L-aspartate: step 4/4.</text>
</comment>
<comment type="subunit">
    <text evidence="1">Homotetramer.</text>
</comment>
<comment type="subcellular location">
    <subcellularLocation>
        <location evidence="1">Cytoplasm</location>
    </subcellularLocation>
</comment>
<comment type="similarity">
    <text evidence="1">Belongs to the DapB family.</text>
</comment>
<comment type="caution">
    <text evidence="2">Was originally thought to be a dihydrodipicolinate reductase (DHDPR), catalyzing the conversion of dihydrodipicolinate to tetrahydrodipicolinate. However, it was shown in E.coli that the substrate of the enzymatic reaction is not dihydrodipicolinate (DHDP) but in fact (2S,4S)-4-hydroxy-2,3,4,5-tetrahydrodipicolinic acid (HTPA), the product released by the DapA-catalyzed reaction.</text>
</comment>
<keyword id="KW-0028">Amino-acid biosynthesis</keyword>
<keyword id="KW-0963">Cytoplasm</keyword>
<keyword id="KW-0220">Diaminopimelate biosynthesis</keyword>
<keyword id="KW-0457">Lysine biosynthesis</keyword>
<keyword id="KW-0520">NAD</keyword>
<keyword id="KW-0521">NADP</keyword>
<keyword id="KW-0560">Oxidoreductase</keyword>
<name>DAPB_SALTI</name>
<feature type="chain" id="PRO_0000141481" description="4-hydroxy-tetrahydrodipicolinate reductase">
    <location>
        <begin position="1"/>
        <end position="273"/>
    </location>
</feature>
<feature type="active site" description="Proton donor/acceptor" evidence="1">
    <location>
        <position position="159"/>
    </location>
</feature>
<feature type="active site" description="Proton donor" evidence="1">
    <location>
        <position position="163"/>
    </location>
</feature>
<feature type="binding site" evidence="1">
    <location>
        <begin position="12"/>
        <end position="17"/>
    </location>
    <ligand>
        <name>NAD(+)</name>
        <dbReference type="ChEBI" id="CHEBI:57540"/>
    </ligand>
</feature>
<feature type="binding site" evidence="1">
    <location>
        <position position="38"/>
    </location>
    <ligand>
        <name>NAD(+)</name>
        <dbReference type="ChEBI" id="CHEBI:57540"/>
    </ligand>
</feature>
<feature type="binding site" evidence="1">
    <location>
        <position position="39"/>
    </location>
    <ligand>
        <name>NADP(+)</name>
        <dbReference type="ChEBI" id="CHEBI:58349"/>
    </ligand>
</feature>
<feature type="binding site" evidence="1">
    <location>
        <begin position="102"/>
        <end position="104"/>
    </location>
    <ligand>
        <name>NAD(+)</name>
        <dbReference type="ChEBI" id="CHEBI:57540"/>
    </ligand>
</feature>
<feature type="binding site" evidence="1">
    <location>
        <begin position="126"/>
        <end position="129"/>
    </location>
    <ligand>
        <name>NAD(+)</name>
        <dbReference type="ChEBI" id="CHEBI:57540"/>
    </ligand>
</feature>
<feature type="binding site" evidence="1">
    <location>
        <position position="160"/>
    </location>
    <ligand>
        <name>(S)-2,3,4,5-tetrahydrodipicolinate</name>
        <dbReference type="ChEBI" id="CHEBI:16845"/>
    </ligand>
</feature>
<feature type="binding site" evidence="1">
    <location>
        <begin position="169"/>
        <end position="170"/>
    </location>
    <ligand>
        <name>(S)-2,3,4,5-tetrahydrodipicolinate</name>
        <dbReference type="ChEBI" id="CHEBI:16845"/>
    </ligand>
</feature>
<proteinExistence type="inferred from homology"/>
<evidence type="ECO:0000255" key="1">
    <source>
        <dbReference type="HAMAP-Rule" id="MF_00102"/>
    </source>
</evidence>
<evidence type="ECO:0000305" key="2"/>
<protein>
    <recommendedName>
        <fullName evidence="1">4-hydroxy-tetrahydrodipicolinate reductase</fullName>
        <shortName evidence="1">HTPA reductase</shortName>
        <ecNumber evidence="1">1.17.1.8</ecNumber>
    </recommendedName>
</protein>
<organism>
    <name type="scientific">Salmonella typhi</name>
    <dbReference type="NCBI Taxonomy" id="90370"/>
    <lineage>
        <taxon>Bacteria</taxon>
        <taxon>Pseudomonadati</taxon>
        <taxon>Pseudomonadota</taxon>
        <taxon>Gammaproteobacteria</taxon>
        <taxon>Enterobacterales</taxon>
        <taxon>Enterobacteriaceae</taxon>
        <taxon>Salmonella</taxon>
    </lineage>
</organism>
<gene>
    <name evidence="1" type="primary">dapB</name>
    <name type="ordered locus">STY0073</name>
    <name type="ordered locus">t0066</name>
</gene>
<sequence>MHEAQIRVAIAGAGGRMGRQLIQAAMAMEGVQLGAALEREGSSLLGSDAGELAGAGKSGVIVQSSLEAVKDDFDVFIDFTRPEGTLTHLAFCRQHGKGMVIGTTGFDDAGKQAIREASQEIAIVFAANFSVGVNVMLKLLEKAAKVMGDYSDIEIIEAHHRHKVDAPSGTALAMGEAIAGALDKDLKDCAVYSREGYTGERVPGTIGFATVRAGDIVGEHTAMFADIGERVEITHKASSRMTFANGALRSALWLKTKKNGLFDMRDVLGLDVL</sequence>